<accession>B5DFN3</accession>
<reference key="1">
    <citation type="submission" date="2005-07" db="EMBL/GenBank/DDBJ databases">
        <authorList>
            <person name="Mural R.J."/>
            <person name="Adams M.D."/>
            <person name="Myers E.W."/>
            <person name="Smith H.O."/>
            <person name="Venter J.C."/>
        </authorList>
    </citation>
    <scope>NUCLEOTIDE SEQUENCE [LARGE SCALE GENOMIC DNA]</scope>
</reference>
<reference key="2">
    <citation type="journal article" date="2004" name="Genome Res.">
        <title>The status, quality, and expansion of the NIH full-length cDNA project: the Mammalian Gene Collection (MGC).</title>
        <authorList>
            <consortium name="The MGC Project Team"/>
        </authorList>
    </citation>
    <scope>NUCLEOTIDE SEQUENCE [LARGE SCALE MRNA]</scope>
    <source>
        <tissue>Pituitary anterior lobe</tissue>
    </source>
</reference>
<protein>
    <recommendedName>
        <fullName>Ubiquinol-cytochrome-c reductase complex assembly factor 2</fullName>
    </recommendedName>
    <alternativeName>
        <fullName>Mitochondrial nucleoid factor 1</fullName>
    </alternativeName>
    <alternativeName>
        <fullName>Mitochondrial protein M19</fullName>
    </alternativeName>
</protein>
<proteinExistence type="evidence at transcript level"/>
<feature type="transit peptide" description="Mitochondrion" evidence="1">
    <location>
        <begin position="1"/>
        <end position="13"/>
    </location>
</feature>
<feature type="chain" id="PRO_0000416462" description="Ubiquinol-cytochrome-c reductase complex assembly factor 2">
    <location>
        <begin position="14"/>
        <end position="136"/>
    </location>
</feature>
<organism>
    <name type="scientific">Rattus norvegicus</name>
    <name type="common">Rat</name>
    <dbReference type="NCBI Taxonomy" id="10116"/>
    <lineage>
        <taxon>Eukaryota</taxon>
        <taxon>Metazoa</taxon>
        <taxon>Chordata</taxon>
        <taxon>Craniata</taxon>
        <taxon>Vertebrata</taxon>
        <taxon>Euteleostomi</taxon>
        <taxon>Mammalia</taxon>
        <taxon>Eutheria</taxon>
        <taxon>Euarchontoglires</taxon>
        <taxon>Glires</taxon>
        <taxon>Rodentia</taxon>
        <taxon>Myomorpha</taxon>
        <taxon>Muroidea</taxon>
        <taxon>Muridae</taxon>
        <taxon>Murinae</taxon>
        <taxon>Rattus</taxon>
    </lineage>
</organism>
<dbReference type="EMBL" id="CH473988">
    <property type="protein sequence ID" value="EDL96879.1"/>
    <property type="molecule type" value="Genomic_DNA"/>
</dbReference>
<dbReference type="EMBL" id="BC169127">
    <property type="protein sequence ID" value="AAI69127.1"/>
    <property type="molecule type" value="mRNA"/>
</dbReference>
<dbReference type="RefSeq" id="NP_001101998.1">
    <property type="nucleotide sequence ID" value="NM_001108528.1"/>
</dbReference>
<dbReference type="BioGRID" id="262970">
    <property type="interactions" value="1"/>
</dbReference>
<dbReference type="FunCoup" id="B5DFN3">
    <property type="interactions" value="383"/>
</dbReference>
<dbReference type="iPTMnet" id="B5DFN3"/>
<dbReference type="PhosphoSitePlus" id="B5DFN3"/>
<dbReference type="SwissPalm" id="B5DFN3"/>
<dbReference type="jPOST" id="B5DFN3"/>
<dbReference type="PaxDb" id="10116-ENSRNOP00000036200"/>
<dbReference type="PeptideAtlas" id="B5DFN3"/>
<dbReference type="GeneID" id="361805"/>
<dbReference type="KEGG" id="rno:361805"/>
<dbReference type="UCSC" id="RGD:1306917">
    <property type="organism name" value="rat"/>
</dbReference>
<dbReference type="AGR" id="RGD:1306917"/>
<dbReference type="CTD" id="84300"/>
<dbReference type="RGD" id="1306917">
    <property type="gene designation" value="Uqcc2"/>
</dbReference>
<dbReference type="VEuPathDB" id="HostDB:ENSRNOG00000025909"/>
<dbReference type="eggNOG" id="ENOG502S2M4">
    <property type="taxonomic scope" value="Eukaryota"/>
</dbReference>
<dbReference type="HOGENOM" id="CLU_162766_0_0_1"/>
<dbReference type="InParanoid" id="B5DFN3"/>
<dbReference type="OrthoDB" id="6266314at2759"/>
<dbReference type="PhylomeDB" id="B5DFN3"/>
<dbReference type="TreeFam" id="TF333267"/>
<dbReference type="PRO" id="PR:B5DFN3"/>
<dbReference type="Proteomes" id="UP000002494">
    <property type="component" value="Chromosome 20"/>
</dbReference>
<dbReference type="Proteomes" id="UP000234681">
    <property type="component" value="Chromosome 20"/>
</dbReference>
<dbReference type="Bgee" id="ENSRNOG00000025909">
    <property type="expression patterns" value="Expressed in quadriceps femoris and 20 other cell types or tissues"/>
</dbReference>
<dbReference type="ExpressionAtlas" id="B5DFN3">
    <property type="expression patterns" value="baseline and differential"/>
</dbReference>
<dbReference type="GO" id="GO:0005743">
    <property type="term" value="C:mitochondrial inner membrane"/>
    <property type="evidence" value="ECO:0000250"/>
    <property type="project" value="UniProtKB"/>
</dbReference>
<dbReference type="GO" id="GO:0005758">
    <property type="term" value="C:mitochondrial intermembrane space"/>
    <property type="evidence" value="ECO:0000250"/>
    <property type="project" value="UniProtKB"/>
</dbReference>
<dbReference type="GO" id="GO:0005759">
    <property type="term" value="C:mitochondrial matrix"/>
    <property type="evidence" value="ECO:0000250"/>
    <property type="project" value="UniProtKB"/>
</dbReference>
<dbReference type="GO" id="GO:0042645">
    <property type="term" value="C:mitochondrial nucleoid"/>
    <property type="evidence" value="ECO:0000250"/>
    <property type="project" value="UniProtKB"/>
</dbReference>
<dbReference type="GO" id="GO:0005739">
    <property type="term" value="C:mitochondrion"/>
    <property type="evidence" value="ECO:0000250"/>
    <property type="project" value="UniProtKB"/>
</dbReference>
<dbReference type="GO" id="GO:0034551">
    <property type="term" value="P:mitochondrial respiratory chain complex III assembly"/>
    <property type="evidence" value="ECO:0000250"/>
    <property type="project" value="UniProtKB"/>
</dbReference>
<dbReference type="GO" id="GO:0070131">
    <property type="term" value="P:positive regulation of mitochondrial translation"/>
    <property type="evidence" value="ECO:0000250"/>
    <property type="project" value="UniProtKB"/>
</dbReference>
<dbReference type="GO" id="GO:0050796">
    <property type="term" value="P:regulation of insulin secretion"/>
    <property type="evidence" value="ECO:0000250"/>
    <property type="project" value="UniProtKB"/>
</dbReference>
<dbReference type="GO" id="GO:0002082">
    <property type="term" value="P:regulation of oxidative phosphorylation"/>
    <property type="evidence" value="ECO:0000250"/>
    <property type="project" value="UniProtKB"/>
</dbReference>
<dbReference type="GO" id="GO:2001014">
    <property type="term" value="P:regulation of skeletal muscle cell differentiation"/>
    <property type="evidence" value="ECO:0000250"/>
    <property type="project" value="UniProtKB"/>
</dbReference>
<dbReference type="InterPro" id="IPR037698">
    <property type="entry name" value="UQCC2"/>
</dbReference>
<dbReference type="PANTHER" id="PTHR34260">
    <property type="entry name" value="UBIQUINOL-CYTOCHROME-C REDUCTASE COMPLEX ASSEMBLY FACTOR 2"/>
    <property type="match status" value="1"/>
</dbReference>
<dbReference type="PANTHER" id="PTHR34260:SF1">
    <property type="entry name" value="UBIQUINOL-CYTOCHROME-C REDUCTASE COMPLEX ASSEMBLY FACTOR 2"/>
    <property type="match status" value="1"/>
</dbReference>
<dbReference type="Pfam" id="PF20180">
    <property type="entry name" value="UQCC2_CBP6"/>
    <property type="match status" value="1"/>
</dbReference>
<sequence>MAALRYRRFLKLCEEWPVDETKRGRDLGAYLRQRVAQAFREGENTQVAEPEACDQMYESLARLHSNYYKHKYPRPRDTSFSGLSVEEYKLILSTDTLEEFQEMNKSVWRKLQEKFAPTRPEEKHRAWTRVLSRPRT</sequence>
<comment type="function">
    <text evidence="2 3">Required for the assembly of the ubiquinol-cytochrome c reductase complex (mitochondrial respiratory chain complex III or cytochrome b-c1 complex). Plays a role in the modulation of respiratory chain activities such as oxygen consumption and ATP production and via its modulation of the respiratory chain activity can regulate skeletal muscle differentiation and insulin secretion by pancreatic beta-cells. Involved in cytochrome b translation and/or stability.</text>
</comment>
<comment type="subunit">
    <text evidence="2">Interacts with UQCC1.</text>
</comment>
<comment type="subcellular location">
    <subcellularLocation>
        <location evidence="1">Mitochondrion matrix</location>
        <location evidence="1">Mitochondrion nucleoid</location>
    </subcellularLocation>
    <subcellularLocation>
        <location evidence="1">Mitochondrion</location>
    </subcellularLocation>
    <subcellularLocation>
        <location evidence="1">Mitochondrion intermembrane space</location>
    </subcellularLocation>
    <subcellularLocation>
        <location evidence="1">Mitochondrion matrix</location>
    </subcellularLocation>
    <subcellularLocation>
        <location evidence="1">Mitochondrion inner membrane</location>
    </subcellularLocation>
    <text evidence="1">Predominantly expressed in the mitochondrial inner membrane.</text>
</comment>
<keyword id="KW-0472">Membrane</keyword>
<keyword id="KW-0496">Mitochondrion</keyword>
<keyword id="KW-0999">Mitochondrion inner membrane</keyword>
<keyword id="KW-1135">Mitochondrion nucleoid</keyword>
<keyword id="KW-1185">Reference proteome</keyword>
<keyword id="KW-0809">Transit peptide</keyword>
<name>UQCC2_RAT</name>
<evidence type="ECO:0000250" key="1"/>
<evidence type="ECO:0000250" key="2">
    <source>
        <dbReference type="UniProtKB" id="Q9BRT2"/>
    </source>
</evidence>
<evidence type="ECO:0000250" key="3">
    <source>
        <dbReference type="UniProtKB" id="Q9CQY6"/>
    </source>
</evidence>
<gene>
    <name type="primary">Uqcc2</name>
    <name type="synonym">Mnf1</name>
</gene>